<keyword id="KW-0963">Cytoplasm</keyword>
<keyword id="KW-0342">GTP-binding</keyword>
<keyword id="KW-0547">Nucleotide-binding</keyword>
<keyword id="KW-0648">Protein biosynthesis</keyword>
<keyword id="KW-1185">Reference proteome</keyword>
<proteinExistence type="inferred from homology"/>
<reference key="1">
    <citation type="journal article" date="2003" name="J. Bacteriol.">
        <title>Complete genome sequence of the ammonia-oxidizing bacterium and obligate chemolithoautotroph Nitrosomonas europaea.</title>
        <authorList>
            <person name="Chain P."/>
            <person name="Lamerdin J.E."/>
            <person name="Larimer F.W."/>
            <person name="Regala W."/>
            <person name="Lao V."/>
            <person name="Land M.L."/>
            <person name="Hauser L."/>
            <person name="Hooper A.B."/>
            <person name="Klotz M.G."/>
            <person name="Norton J."/>
            <person name="Sayavedra-Soto L.A."/>
            <person name="Arciero D.M."/>
            <person name="Hommes N.G."/>
            <person name="Whittaker M.M."/>
            <person name="Arp D.J."/>
        </authorList>
    </citation>
    <scope>NUCLEOTIDE SEQUENCE [LARGE SCALE GENOMIC DNA]</scope>
    <source>
        <strain>ATCC 19718 / CIP 103999 / KCTC 2705 / NBRC 14298</strain>
    </source>
</reference>
<sequence length="535" mass="59730">MTIDHEVKRRRTFAIISHPDAGKTTLTEKLLLFAGAIHIAGSVKARKASRHATSDWMEIEKQRGISVASSVMQMEYRDCVINLLDTPGHQDFSEDTYRVLTAVDAALMVIDAANGVESQTLRLLQVCRARNTPIITFVNKLDREVREPLDLIDEIERTLGMDVIPFTWPVGSGKRFHGVYDLRHKLMRVFRAGMDRVEQEETAIITNLEDPAISERFGANLEQARQEIELITGAAPEFDQTAFLAGQQTPVFFGSAINNFGVQEVLDTLVELAPPPGSRKAIQREIQPAEKKFSGVVFKIQANMNPAHRDRIAFVRICSGEFRRGMNLKVVRSGKDVRTSTVVSFLSQRRELLETAYAGDIIGIPNHGTLQLADTLTEGDHLQFTGLPFFAPEIFQTVEIADPLRSKQLKLGLAQLGEEGAIQVFRPHIGSMLLLGAVGVLQFEVVTHRLKHEYGVEARIAPAKYQLARWVTAETPQELQRFIDANAHRIAYDAVNAPTFLASFSAEISVAEENWPGIRFHKMREHAGLMFQTAG</sequence>
<name>RF3_NITEU</name>
<accession>Q82S73</accession>
<feature type="chain" id="PRO_0000210952" description="Peptide chain release factor 3">
    <location>
        <begin position="1"/>
        <end position="535"/>
    </location>
</feature>
<feature type="domain" description="tr-type G">
    <location>
        <begin position="8"/>
        <end position="277"/>
    </location>
</feature>
<feature type="binding site" evidence="1">
    <location>
        <begin position="17"/>
        <end position="24"/>
    </location>
    <ligand>
        <name>GTP</name>
        <dbReference type="ChEBI" id="CHEBI:37565"/>
    </ligand>
</feature>
<feature type="binding site" evidence="1">
    <location>
        <begin position="85"/>
        <end position="89"/>
    </location>
    <ligand>
        <name>GTP</name>
        <dbReference type="ChEBI" id="CHEBI:37565"/>
    </ligand>
</feature>
<feature type="binding site" evidence="1">
    <location>
        <begin position="139"/>
        <end position="142"/>
    </location>
    <ligand>
        <name>GTP</name>
        <dbReference type="ChEBI" id="CHEBI:37565"/>
    </ligand>
</feature>
<comment type="function">
    <text evidence="1">Increases the formation of ribosomal termination complexes and stimulates activities of RF-1 and RF-2. It binds guanine nucleotides and has strong preference for UGA stop codons. It may interact directly with the ribosome. The stimulation of RF-1 and RF-2 is significantly reduced by GTP and GDP, but not by GMP.</text>
</comment>
<comment type="subcellular location">
    <subcellularLocation>
        <location evidence="1">Cytoplasm</location>
    </subcellularLocation>
</comment>
<comment type="similarity">
    <text evidence="1">Belongs to the TRAFAC class translation factor GTPase superfamily. Classic translation factor GTPase family. PrfC subfamily.</text>
</comment>
<protein>
    <recommendedName>
        <fullName evidence="1">Peptide chain release factor 3</fullName>
        <shortName evidence="1">RF-3</shortName>
    </recommendedName>
</protein>
<gene>
    <name evidence="1" type="primary">prfC</name>
    <name type="ordered locus">NE2481</name>
</gene>
<organism>
    <name type="scientific">Nitrosomonas europaea (strain ATCC 19718 / CIP 103999 / KCTC 2705 / NBRC 14298)</name>
    <dbReference type="NCBI Taxonomy" id="228410"/>
    <lineage>
        <taxon>Bacteria</taxon>
        <taxon>Pseudomonadati</taxon>
        <taxon>Pseudomonadota</taxon>
        <taxon>Betaproteobacteria</taxon>
        <taxon>Nitrosomonadales</taxon>
        <taxon>Nitrosomonadaceae</taxon>
        <taxon>Nitrosomonas</taxon>
    </lineage>
</organism>
<evidence type="ECO:0000255" key="1">
    <source>
        <dbReference type="HAMAP-Rule" id="MF_00072"/>
    </source>
</evidence>
<dbReference type="EMBL" id="AL954747">
    <property type="protein sequence ID" value="CAD86393.1"/>
    <property type="molecule type" value="Genomic_DNA"/>
</dbReference>
<dbReference type="RefSeq" id="WP_011112943.1">
    <property type="nucleotide sequence ID" value="NC_004757.1"/>
</dbReference>
<dbReference type="SMR" id="Q82S73"/>
<dbReference type="STRING" id="228410.NE2481"/>
<dbReference type="GeneID" id="87105610"/>
<dbReference type="KEGG" id="neu:NE2481"/>
<dbReference type="eggNOG" id="COG4108">
    <property type="taxonomic scope" value="Bacteria"/>
</dbReference>
<dbReference type="HOGENOM" id="CLU_002794_2_1_4"/>
<dbReference type="OrthoDB" id="9804431at2"/>
<dbReference type="PhylomeDB" id="Q82S73"/>
<dbReference type="Proteomes" id="UP000001416">
    <property type="component" value="Chromosome"/>
</dbReference>
<dbReference type="GO" id="GO:0005829">
    <property type="term" value="C:cytosol"/>
    <property type="evidence" value="ECO:0007669"/>
    <property type="project" value="TreeGrafter"/>
</dbReference>
<dbReference type="GO" id="GO:0005525">
    <property type="term" value="F:GTP binding"/>
    <property type="evidence" value="ECO:0007669"/>
    <property type="project" value="UniProtKB-UniRule"/>
</dbReference>
<dbReference type="GO" id="GO:0003924">
    <property type="term" value="F:GTPase activity"/>
    <property type="evidence" value="ECO:0007669"/>
    <property type="project" value="InterPro"/>
</dbReference>
<dbReference type="GO" id="GO:0016150">
    <property type="term" value="F:translation release factor activity, codon nonspecific"/>
    <property type="evidence" value="ECO:0007669"/>
    <property type="project" value="TreeGrafter"/>
</dbReference>
<dbReference type="GO" id="GO:0016149">
    <property type="term" value="F:translation release factor activity, codon specific"/>
    <property type="evidence" value="ECO:0007669"/>
    <property type="project" value="UniProtKB-UniRule"/>
</dbReference>
<dbReference type="GO" id="GO:0006449">
    <property type="term" value="P:regulation of translational termination"/>
    <property type="evidence" value="ECO:0007669"/>
    <property type="project" value="UniProtKB-UniRule"/>
</dbReference>
<dbReference type="CDD" id="cd04169">
    <property type="entry name" value="RF3"/>
    <property type="match status" value="1"/>
</dbReference>
<dbReference type="CDD" id="cd03689">
    <property type="entry name" value="RF3_II"/>
    <property type="match status" value="1"/>
</dbReference>
<dbReference type="FunFam" id="3.30.70.3280:FF:000001">
    <property type="entry name" value="Peptide chain release factor 3"/>
    <property type="match status" value="1"/>
</dbReference>
<dbReference type="FunFam" id="3.40.50.300:FF:000542">
    <property type="entry name" value="Peptide chain release factor 3"/>
    <property type="match status" value="1"/>
</dbReference>
<dbReference type="Gene3D" id="3.40.50.300">
    <property type="entry name" value="P-loop containing nucleotide triphosphate hydrolases"/>
    <property type="match status" value="2"/>
</dbReference>
<dbReference type="Gene3D" id="3.30.70.3280">
    <property type="entry name" value="Peptide chain release factor 3, domain III"/>
    <property type="match status" value="1"/>
</dbReference>
<dbReference type="HAMAP" id="MF_00072">
    <property type="entry name" value="Rel_fac_3"/>
    <property type="match status" value="1"/>
</dbReference>
<dbReference type="InterPro" id="IPR053905">
    <property type="entry name" value="EF-G-like_DII"/>
</dbReference>
<dbReference type="InterPro" id="IPR035647">
    <property type="entry name" value="EFG_III/V"/>
</dbReference>
<dbReference type="InterPro" id="IPR031157">
    <property type="entry name" value="G_TR_CS"/>
</dbReference>
<dbReference type="InterPro" id="IPR027417">
    <property type="entry name" value="P-loop_NTPase"/>
</dbReference>
<dbReference type="InterPro" id="IPR004548">
    <property type="entry name" value="PrfC"/>
</dbReference>
<dbReference type="InterPro" id="IPR032090">
    <property type="entry name" value="RF3_C"/>
</dbReference>
<dbReference type="InterPro" id="IPR038467">
    <property type="entry name" value="RF3_dom_3_sf"/>
</dbReference>
<dbReference type="InterPro" id="IPR041732">
    <property type="entry name" value="RF3_GTP-bd"/>
</dbReference>
<dbReference type="InterPro" id="IPR005225">
    <property type="entry name" value="Small_GTP-bd"/>
</dbReference>
<dbReference type="InterPro" id="IPR000795">
    <property type="entry name" value="T_Tr_GTP-bd_dom"/>
</dbReference>
<dbReference type="InterPro" id="IPR009000">
    <property type="entry name" value="Transl_B-barrel_sf"/>
</dbReference>
<dbReference type="NCBIfam" id="TIGR00503">
    <property type="entry name" value="prfC"/>
    <property type="match status" value="1"/>
</dbReference>
<dbReference type="NCBIfam" id="NF001964">
    <property type="entry name" value="PRK00741.1"/>
    <property type="match status" value="1"/>
</dbReference>
<dbReference type="NCBIfam" id="TIGR00231">
    <property type="entry name" value="small_GTP"/>
    <property type="match status" value="1"/>
</dbReference>
<dbReference type="PANTHER" id="PTHR43556">
    <property type="entry name" value="PEPTIDE CHAIN RELEASE FACTOR RF3"/>
    <property type="match status" value="1"/>
</dbReference>
<dbReference type="PANTHER" id="PTHR43556:SF2">
    <property type="entry name" value="PEPTIDE CHAIN RELEASE FACTOR RF3"/>
    <property type="match status" value="1"/>
</dbReference>
<dbReference type="Pfam" id="PF22042">
    <property type="entry name" value="EF-G_D2"/>
    <property type="match status" value="1"/>
</dbReference>
<dbReference type="Pfam" id="PF00009">
    <property type="entry name" value="GTP_EFTU"/>
    <property type="match status" value="1"/>
</dbReference>
<dbReference type="Pfam" id="PF16658">
    <property type="entry name" value="RF3_C"/>
    <property type="match status" value="1"/>
</dbReference>
<dbReference type="PRINTS" id="PR00315">
    <property type="entry name" value="ELONGATNFCT"/>
</dbReference>
<dbReference type="SUPFAM" id="SSF54980">
    <property type="entry name" value="EF-G C-terminal domain-like"/>
    <property type="match status" value="1"/>
</dbReference>
<dbReference type="SUPFAM" id="SSF52540">
    <property type="entry name" value="P-loop containing nucleoside triphosphate hydrolases"/>
    <property type="match status" value="1"/>
</dbReference>
<dbReference type="SUPFAM" id="SSF50447">
    <property type="entry name" value="Translation proteins"/>
    <property type="match status" value="1"/>
</dbReference>
<dbReference type="PROSITE" id="PS00301">
    <property type="entry name" value="G_TR_1"/>
    <property type="match status" value="1"/>
</dbReference>
<dbReference type="PROSITE" id="PS51722">
    <property type="entry name" value="G_TR_2"/>
    <property type="match status" value="1"/>
</dbReference>